<sequence>MPKMKSNKSVAARFKLTGSGQLKRTRPGKRHKLSKKSSQEKRNLSKQPLVDKGQVGMYKRMMLV</sequence>
<comment type="similarity">
    <text evidence="1">Belongs to the bacterial ribosomal protein bL35 family.</text>
</comment>
<evidence type="ECO:0000255" key="1">
    <source>
        <dbReference type="HAMAP-Rule" id="MF_00514"/>
    </source>
</evidence>
<evidence type="ECO:0000256" key="2">
    <source>
        <dbReference type="SAM" id="MobiDB-lite"/>
    </source>
</evidence>
<evidence type="ECO:0000305" key="3"/>
<proteinExistence type="inferred from homology"/>
<organism>
    <name type="scientific">Chlamydia felis (strain Fe/C-56)</name>
    <name type="common">Chlamydophila felis</name>
    <dbReference type="NCBI Taxonomy" id="264202"/>
    <lineage>
        <taxon>Bacteria</taxon>
        <taxon>Pseudomonadati</taxon>
        <taxon>Chlamydiota</taxon>
        <taxon>Chlamydiia</taxon>
        <taxon>Chlamydiales</taxon>
        <taxon>Chlamydiaceae</taxon>
        <taxon>Chlamydia/Chlamydophila group</taxon>
        <taxon>Chlamydia</taxon>
    </lineage>
</organism>
<keyword id="KW-0687">Ribonucleoprotein</keyword>
<keyword id="KW-0689">Ribosomal protein</keyword>
<gene>
    <name evidence="1" type="primary">rpmI</name>
    <name type="ordered locus">CF0244</name>
</gene>
<reference key="1">
    <citation type="journal article" date="2006" name="DNA Res.">
        <title>Genome sequence of the cat pathogen, Chlamydophila felis.</title>
        <authorList>
            <person name="Azuma Y."/>
            <person name="Hirakawa H."/>
            <person name="Yamashita A."/>
            <person name="Cai Y."/>
            <person name="Rahman M.A."/>
            <person name="Suzuki H."/>
            <person name="Mitaku S."/>
            <person name="Toh H."/>
            <person name="Goto S."/>
            <person name="Murakami T."/>
            <person name="Sugi K."/>
            <person name="Hayashi H."/>
            <person name="Fukushi H."/>
            <person name="Hattori M."/>
            <person name="Kuhara S."/>
            <person name="Shirai M."/>
        </authorList>
    </citation>
    <scope>NUCLEOTIDE SEQUENCE [LARGE SCALE GENOMIC DNA]</scope>
    <source>
        <strain>Fe/C-56</strain>
    </source>
</reference>
<name>RL35_CHLFF</name>
<dbReference type="EMBL" id="AP006861">
    <property type="protein sequence ID" value="BAE81016.1"/>
    <property type="molecule type" value="Genomic_DNA"/>
</dbReference>
<dbReference type="RefSeq" id="WP_011006725.1">
    <property type="nucleotide sequence ID" value="NC_007899.1"/>
</dbReference>
<dbReference type="SMR" id="Q255M2"/>
<dbReference type="STRING" id="264202.CF0244"/>
<dbReference type="GeneID" id="93024293"/>
<dbReference type="KEGG" id="cfe:CF0244"/>
<dbReference type="eggNOG" id="COG0291">
    <property type="taxonomic scope" value="Bacteria"/>
</dbReference>
<dbReference type="HOGENOM" id="CLU_169643_3_0_0"/>
<dbReference type="OrthoDB" id="47476at2"/>
<dbReference type="Proteomes" id="UP000001260">
    <property type="component" value="Chromosome"/>
</dbReference>
<dbReference type="GO" id="GO:0022625">
    <property type="term" value="C:cytosolic large ribosomal subunit"/>
    <property type="evidence" value="ECO:0007669"/>
    <property type="project" value="TreeGrafter"/>
</dbReference>
<dbReference type="GO" id="GO:0003735">
    <property type="term" value="F:structural constituent of ribosome"/>
    <property type="evidence" value="ECO:0007669"/>
    <property type="project" value="InterPro"/>
</dbReference>
<dbReference type="GO" id="GO:0006412">
    <property type="term" value="P:translation"/>
    <property type="evidence" value="ECO:0007669"/>
    <property type="project" value="UniProtKB-UniRule"/>
</dbReference>
<dbReference type="FunFam" id="4.10.410.60:FF:000001">
    <property type="entry name" value="50S ribosomal protein L35"/>
    <property type="match status" value="1"/>
</dbReference>
<dbReference type="Gene3D" id="4.10.410.60">
    <property type="match status" value="1"/>
</dbReference>
<dbReference type="HAMAP" id="MF_00514">
    <property type="entry name" value="Ribosomal_bL35"/>
    <property type="match status" value="1"/>
</dbReference>
<dbReference type="InterPro" id="IPR001706">
    <property type="entry name" value="Ribosomal_bL35"/>
</dbReference>
<dbReference type="InterPro" id="IPR021137">
    <property type="entry name" value="Ribosomal_bL35-like"/>
</dbReference>
<dbReference type="InterPro" id="IPR018265">
    <property type="entry name" value="Ribosomal_bL35_CS"/>
</dbReference>
<dbReference type="InterPro" id="IPR037229">
    <property type="entry name" value="Ribosomal_bL35_sf"/>
</dbReference>
<dbReference type="NCBIfam" id="TIGR00001">
    <property type="entry name" value="rpmI_bact"/>
    <property type="match status" value="1"/>
</dbReference>
<dbReference type="PANTHER" id="PTHR33343">
    <property type="entry name" value="54S RIBOSOMAL PROTEIN BL35M"/>
    <property type="match status" value="1"/>
</dbReference>
<dbReference type="PANTHER" id="PTHR33343:SF1">
    <property type="entry name" value="LARGE RIBOSOMAL SUBUNIT PROTEIN BL35M"/>
    <property type="match status" value="1"/>
</dbReference>
<dbReference type="Pfam" id="PF01632">
    <property type="entry name" value="Ribosomal_L35p"/>
    <property type="match status" value="1"/>
</dbReference>
<dbReference type="PRINTS" id="PR00064">
    <property type="entry name" value="RIBOSOMALL35"/>
</dbReference>
<dbReference type="SUPFAM" id="SSF143034">
    <property type="entry name" value="L35p-like"/>
    <property type="match status" value="1"/>
</dbReference>
<dbReference type="PROSITE" id="PS00936">
    <property type="entry name" value="RIBOSOMAL_L35"/>
    <property type="match status" value="1"/>
</dbReference>
<protein>
    <recommendedName>
        <fullName evidence="1">Large ribosomal subunit protein bL35</fullName>
    </recommendedName>
    <alternativeName>
        <fullName evidence="3">50S ribosomal protein L35</fullName>
    </alternativeName>
</protein>
<accession>Q255M2</accession>
<feature type="chain" id="PRO_0000258657" description="Large ribosomal subunit protein bL35">
    <location>
        <begin position="1"/>
        <end position="64"/>
    </location>
</feature>
<feature type="region of interest" description="Disordered" evidence="2">
    <location>
        <begin position="1"/>
        <end position="56"/>
    </location>
</feature>
<feature type="compositionally biased region" description="Basic residues" evidence="2">
    <location>
        <begin position="23"/>
        <end position="35"/>
    </location>
</feature>